<sequence>MWLLRCVLLCVSLSLAVSGQHKPEAPDYSSVLHCGPWSFQFAVNLNQEATSPPVLIAWDNQGLLHELQNDSDCGTWIRKGPGSSVVLEATYSSCYVTEWDSHYIMPVGVEGAGAAEHKVVTERKLLKCPMDLLARDAPDTDWCDSIPARDRLPCAPSPISRGDCEGLGCCYSSEEVNSCYYGNTVTLHCTREGHFSIAVSRNVTSPPLLLDSVRLALRNDSACNPVMATQAFVLFQFPFTSCGTTRQITGDRAVYENELVATRDVKNGSRGSVTRDSIFRLHVSCSYSVSSNSLPINVQVFTLPPPFPETQPGPLTLELQIAKDKNYGSYYGVGDYPVVKLLRDPIYVEVSILHRTDPYLGLLLQQCWATPSTDPLSQPQWPILVKGCPYIGDNYQTQLIPVQKALDLPFPSHHQRFSIFTFSFVNPTVEKQALRGPVHLHCSVSVCQPAETPSCVVTCPDLSRRRNFDNSSQNTTASVSSKGPMILLQATKDPPEKLRVPVDSKVLWVAGLSGTLILGALLVSYLAVKKQKSCPDQMCQ</sequence>
<gene>
    <name type="primary">ZP4</name>
    <name type="synonym">ZPB</name>
</gene>
<comment type="function">
    <text>Component of the zona pellucida, an extracellular matrix surrounding oocytes which mediates sperm binding, induction of the acrosome reaction and prevents post-fertilization polyspermy. The zona pellucida is composed of 3 to 4 glycoproteins, ZP1, ZP2, ZP3, and ZP4. ZP4 may act as a sperm receptor.</text>
</comment>
<comment type="interaction">
    <interactant intactId="EBI-11783805">
        <id>Q12836</id>
    </interactant>
    <interactant intactId="EBI-21280149">
        <id>P10323</id>
        <label>ACR</label>
    </interactant>
    <organismsDiffer>false</organismsDiffer>
    <experiments>2</experiments>
</comment>
<comment type="interaction">
    <interactant intactId="EBI-11783805">
        <id>Q12836</id>
    </interactant>
    <interactant intactId="EBI-350350">
        <id>P21266</id>
        <label>GSTM3</label>
    </interactant>
    <organismsDiffer>false</organismsDiffer>
    <experiments>2</experiments>
</comment>
<comment type="interaction">
    <interactant intactId="EBI-11783805">
        <id>Q12836</id>
    </interactant>
    <interactant intactId="EBI-11783805">
        <id>Q12836</id>
        <label>ZP4</label>
    </interactant>
    <organismsDiffer>false</organismsDiffer>
    <experiments>6</experiments>
</comment>
<comment type="subcellular location">
    <molecule>Processed zona pellucida sperm-binding protein 4</molecule>
    <subcellularLocation>
        <location evidence="2">Zona pellucida</location>
    </subcellularLocation>
</comment>
<comment type="subcellular location">
    <subcellularLocation>
        <location evidence="2">Cell membrane</location>
        <topology evidence="3">Single-pass type I membrane protein</topology>
    </subcellularLocation>
</comment>
<comment type="tissue specificity">
    <text>Expressed in oocytes.</text>
</comment>
<comment type="domain">
    <text>The ZP domain is involved in the polymerization of the ZP proteins to form the zona pellucida.</text>
</comment>
<comment type="PTM">
    <text>Proteolytically cleaved before the transmembrane segment to yield the secreted ectodomain incorporated in the zona pellucida.</text>
</comment>
<comment type="similarity">
    <text evidence="6">Belongs to the ZP domain family. ZPB subfamily.</text>
</comment>
<organism>
    <name type="scientific">Homo sapiens</name>
    <name type="common">Human</name>
    <dbReference type="NCBI Taxonomy" id="9606"/>
    <lineage>
        <taxon>Eukaryota</taxon>
        <taxon>Metazoa</taxon>
        <taxon>Chordata</taxon>
        <taxon>Craniata</taxon>
        <taxon>Vertebrata</taxon>
        <taxon>Euteleostomi</taxon>
        <taxon>Mammalia</taxon>
        <taxon>Eutheria</taxon>
        <taxon>Euarchontoglires</taxon>
        <taxon>Primates</taxon>
        <taxon>Haplorrhini</taxon>
        <taxon>Catarrhini</taxon>
        <taxon>Hominidae</taxon>
        <taxon>Homo</taxon>
    </lineage>
</organism>
<feature type="signal peptide" evidence="3">
    <location>
        <begin position="1"/>
        <end position="18"/>
    </location>
</feature>
<feature type="chain" id="PRO_0000041727" description="Zona pellucida sperm-binding protein 4">
    <location>
        <begin position="19"/>
        <end position="462"/>
    </location>
</feature>
<feature type="chain" id="PRO_0000304578" description="Processed zona pellucida sperm-binding protein 4">
    <location>
        <begin position="19"/>
        <end status="unknown"/>
    </location>
</feature>
<feature type="propeptide" id="PRO_0000041728" description="Removed in mature form" evidence="1">
    <location>
        <begin position="463"/>
        <end position="540"/>
    </location>
</feature>
<feature type="topological domain" description="Extracellular" evidence="3">
    <location>
        <begin position="19"/>
        <end position="505"/>
    </location>
</feature>
<feature type="transmembrane region" description="Helical" evidence="3">
    <location>
        <begin position="506"/>
        <end position="526"/>
    </location>
</feature>
<feature type="topological domain" description="Cytoplasmic" evidence="3">
    <location>
        <begin position="527"/>
        <end position="540"/>
    </location>
</feature>
<feature type="domain" description="P-type" evidence="5">
    <location>
        <begin position="141"/>
        <end position="183"/>
    </location>
</feature>
<feature type="domain" description="ZP" evidence="4">
    <location>
        <begin position="188"/>
        <end position="466"/>
    </location>
</feature>
<feature type="glycosylation site" description="N-linked (GlcNAc...) asparagine" evidence="3">
    <location>
        <position position="69"/>
    </location>
</feature>
<feature type="glycosylation site" description="N-linked (GlcNAc...) asparagine" evidence="1">
    <location>
        <position position="202"/>
    </location>
</feature>
<feature type="glycosylation site" description="N-linked (GlcNAc...) asparagine" evidence="1">
    <location>
        <position position="219"/>
    </location>
</feature>
<feature type="glycosylation site" description="N-linked (GlcNAc...) asparagine" evidence="3">
    <location>
        <position position="267"/>
    </location>
</feature>
<feature type="glycosylation site" description="O-linked (GalNAc...) threonine" evidence="1">
    <location>
        <position position="302"/>
    </location>
</feature>
<feature type="glycosylation site" description="N-linked (GlcNAc...) asparagine" evidence="3">
    <location>
        <position position="470"/>
    </location>
</feature>
<feature type="glycosylation site" description="N-linked (GlcNAc...) asparagine" evidence="3">
    <location>
        <position position="474"/>
    </location>
</feature>
<feature type="disulfide bond" evidence="5">
    <location>
        <begin position="367"/>
        <end position="442"/>
    </location>
</feature>
<feature type="sequence variant" id="VAR_052997" description="In dbSNP:rs34370253.">
    <original>A</original>
    <variation>V</variation>
    <location>
        <position position="114"/>
    </location>
</feature>
<feature type="sequence variant" id="VAR_052998" description="In dbSNP:rs34811980.">
    <original>P</original>
    <variation>S</variation>
    <location>
        <position position="295"/>
    </location>
</feature>
<reference key="1">
    <citation type="journal article" date="1994" name="DNA Seq.">
        <title>Cloning and characterization of zona pellucida genes and cDNAs from a variety of mammalian species: the ZPA, ZPB and ZPC gene families.</title>
        <authorList>
            <person name="Harris J.D."/>
            <person name="Hibler D.W."/>
            <person name="Fontenot G.K."/>
            <person name="Hsu K.T."/>
            <person name="Yurewicz E.C."/>
            <person name="Sacco A.G."/>
        </authorList>
    </citation>
    <scope>NUCLEOTIDE SEQUENCE [GENOMIC DNA]</scope>
    <source>
        <tissue>Ovary</tissue>
    </source>
</reference>
<reference key="2">
    <citation type="journal article" date="2004" name="Nat. Genet.">
        <title>Complete sequencing and characterization of 21,243 full-length human cDNAs.</title>
        <authorList>
            <person name="Ota T."/>
            <person name="Suzuki Y."/>
            <person name="Nishikawa T."/>
            <person name="Otsuki T."/>
            <person name="Sugiyama T."/>
            <person name="Irie R."/>
            <person name="Wakamatsu A."/>
            <person name="Hayashi K."/>
            <person name="Sato H."/>
            <person name="Nagai K."/>
            <person name="Kimura K."/>
            <person name="Makita H."/>
            <person name="Sekine M."/>
            <person name="Obayashi M."/>
            <person name="Nishi T."/>
            <person name="Shibahara T."/>
            <person name="Tanaka T."/>
            <person name="Ishii S."/>
            <person name="Yamamoto J."/>
            <person name="Saito K."/>
            <person name="Kawai Y."/>
            <person name="Isono Y."/>
            <person name="Nakamura Y."/>
            <person name="Nagahari K."/>
            <person name="Murakami K."/>
            <person name="Yasuda T."/>
            <person name="Iwayanagi T."/>
            <person name="Wagatsuma M."/>
            <person name="Shiratori A."/>
            <person name="Sudo H."/>
            <person name="Hosoiri T."/>
            <person name="Kaku Y."/>
            <person name="Kodaira H."/>
            <person name="Kondo H."/>
            <person name="Sugawara M."/>
            <person name="Takahashi M."/>
            <person name="Kanda K."/>
            <person name="Yokoi T."/>
            <person name="Furuya T."/>
            <person name="Kikkawa E."/>
            <person name="Omura Y."/>
            <person name="Abe K."/>
            <person name="Kamihara K."/>
            <person name="Katsuta N."/>
            <person name="Sato K."/>
            <person name="Tanikawa M."/>
            <person name="Yamazaki M."/>
            <person name="Ninomiya K."/>
            <person name="Ishibashi T."/>
            <person name="Yamashita H."/>
            <person name="Murakawa K."/>
            <person name="Fujimori K."/>
            <person name="Tanai H."/>
            <person name="Kimata M."/>
            <person name="Watanabe M."/>
            <person name="Hiraoka S."/>
            <person name="Chiba Y."/>
            <person name="Ishida S."/>
            <person name="Ono Y."/>
            <person name="Takiguchi S."/>
            <person name="Watanabe S."/>
            <person name="Yosida M."/>
            <person name="Hotuta T."/>
            <person name="Kusano J."/>
            <person name="Kanehori K."/>
            <person name="Takahashi-Fujii A."/>
            <person name="Hara H."/>
            <person name="Tanase T.-O."/>
            <person name="Nomura Y."/>
            <person name="Togiya S."/>
            <person name="Komai F."/>
            <person name="Hara R."/>
            <person name="Takeuchi K."/>
            <person name="Arita M."/>
            <person name="Imose N."/>
            <person name="Musashino K."/>
            <person name="Yuuki H."/>
            <person name="Oshima A."/>
            <person name="Sasaki N."/>
            <person name="Aotsuka S."/>
            <person name="Yoshikawa Y."/>
            <person name="Matsunawa H."/>
            <person name="Ichihara T."/>
            <person name="Shiohata N."/>
            <person name="Sano S."/>
            <person name="Moriya S."/>
            <person name="Momiyama H."/>
            <person name="Satoh N."/>
            <person name="Takami S."/>
            <person name="Terashima Y."/>
            <person name="Suzuki O."/>
            <person name="Nakagawa S."/>
            <person name="Senoh A."/>
            <person name="Mizoguchi H."/>
            <person name="Goto Y."/>
            <person name="Shimizu F."/>
            <person name="Wakebe H."/>
            <person name="Hishigaki H."/>
            <person name="Watanabe T."/>
            <person name="Sugiyama A."/>
            <person name="Takemoto M."/>
            <person name="Kawakami B."/>
            <person name="Yamazaki M."/>
            <person name="Watanabe K."/>
            <person name="Kumagai A."/>
            <person name="Itakura S."/>
            <person name="Fukuzumi Y."/>
            <person name="Fujimori Y."/>
            <person name="Komiyama M."/>
            <person name="Tashiro H."/>
            <person name="Tanigami A."/>
            <person name="Fujiwara T."/>
            <person name="Ono T."/>
            <person name="Yamada K."/>
            <person name="Fujii Y."/>
            <person name="Ozaki K."/>
            <person name="Hirao M."/>
            <person name="Ohmori Y."/>
            <person name="Kawabata A."/>
            <person name="Hikiji T."/>
            <person name="Kobatake N."/>
            <person name="Inagaki H."/>
            <person name="Ikema Y."/>
            <person name="Okamoto S."/>
            <person name="Okitani R."/>
            <person name="Kawakami T."/>
            <person name="Noguchi S."/>
            <person name="Itoh T."/>
            <person name="Shigeta K."/>
            <person name="Senba T."/>
            <person name="Matsumura K."/>
            <person name="Nakajima Y."/>
            <person name="Mizuno T."/>
            <person name="Morinaga M."/>
            <person name="Sasaki M."/>
            <person name="Togashi T."/>
            <person name="Oyama M."/>
            <person name="Hata H."/>
            <person name="Watanabe M."/>
            <person name="Komatsu T."/>
            <person name="Mizushima-Sugano J."/>
            <person name="Satoh T."/>
            <person name="Shirai Y."/>
            <person name="Takahashi Y."/>
            <person name="Nakagawa K."/>
            <person name="Okumura K."/>
            <person name="Nagase T."/>
            <person name="Nomura N."/>
            <person name="Kikuchi H."/>
            <person name="Masuho Y."/>
            <person name="Yamashita R."/>
            <person name="Nakai K."/>
            <person name="Yada T."/>
            <person name="Nakamura Y."/>
            <person name="Ohara O."/>
            <person name="Isogai T."/>
            <person name="Sugano S."/>
        </authorList>
    </citation>
    <scope>NUCLEOTIDE SEQUENCE [LARGE SCALE MRNA]</scope>
</reference>
<reference key="3">
    <citation type="journal article" date="2006" name="Nature">
        <title>The DNA sequence and biological annotation of human chromosome 1.</title>
        <authorList>
            <person name="Gregory S.G."/>
            <person name="Barlow K.F."/>
            <person name="McLay K.E."/>
            <person name="Kaul R."/>
            <person name="Swarbreck D."/>
            <person name="Dunham A."/>
            <person name="Scott C.E."/>
            <person name="Howe K.L."/>
            <person name="Woodfine K."/>
            <person name="Spencer C.C.A."/>
            <person name="Jones M.C."/>
            <person name="Gillson C."/>
            <person name="Searle S."/>
            <person name="Zhou Y."/>
            <person name="Kokocinski F."/>
            <person name="McDonald L."/>
            <person name="Evans R."/>
            <person name="Phillips K."/>
            <person name="Atkinson A."/>
            <person name="Cooper R."/>
            <person name="Jones C."/>
            <person name="Hall R.E."/>
            <person name="Andrews T.D."/>
            <person name="Lloyd C."/>
            <person name="Ainscough R."/>
            <person name="Almeida J.P."/>
            <person name="Ambrose K.D."/>
            <person name="Anderson F."/>
            <person name="Andrew R.W."/>
            <person name="Ashwell R.I.S."/>
            <person name="Aubin K."/>
            <person name="Babbage A.K."/>
            <person name="Bagguley C.L."/>
            <person name="Bailey J."/>
            <person name="Beasley H."/>
            <person name="Bethel G."/>
            <person name="Bird C.P."/>
            <person name="Bray-Allen S."/>
            <person name="Brown J.Y."/>
            <person name="Brown A.J."/>
            <person name="Buckley D."/>
            <person name="Burton J."/>
            <person name="Bye J."/>
            <person name="Carder C."/>
            <person name="Chapman J.C."/>
            <person name="Clark S.Y."/>
            <person name="Clarke G."/>
            <person name="Clee C."/>
            <person name="Cobley V."/>
            <person name="Collier R.E."/>
            <person name="Corby N."/>
            <person name="Coville G.J."/>
            <person name="Davies J."/>
            <person name="Deadman R."/>
            <person name="Dunn M."/>
            <person name="Earthrowl M."/>
            <person name="Ellington A.G."/>
            <person name="Errington H."/>
            <person name="Frankish A."/>
            <person name="Frankland J."/>
            <person name="French L."/>
            <person name="Garner P."/>
            <person name="Garnett J."/>
            <person name="Gay L."/>
            <person name="Ghori M.R.J."/>
            <person name="Gibson R."/>
            <person name="Gilby L.M."/>
            <person name="Gillett W."/>
            <person name="Glithero R.J."/>
            <person name="Grafham D.V."/>
            <person name="Griffiths C."/>
            <person name="Griffiths-Jones S."/>
            <person name="Grocock R."/>
            <person name="Hammond S."/>
            <person name="Harrison E.S.I."/>
            <person name="Hart E."/>
            <person name="Haugen E."/>
            <person name="Heath P.D."/>
            <person name="Holmes S."/>
            <person name="Holt K."/>
            <person name="Howden P.J."/>
            <person name="Hunt A.R."/>
            <person name="Hunt S.E."/>
            <person name="Hunter G."/>
            <person name="Isherwood J."/>
            <person name="James R."/>
            <person name="Johnson C."/>
            <person name="Johnson D."/>
            <person name="Joy A."/>
            <person name="Kay M."/>
            <person name="Kershaw J.K."/>
            <person name="Kibukawa M."/>
            <person name="Kimberley A.M."/>
            <person name="King A."/>
            <person name="Knights A.J."/>
            <person name="Lad H."/>
            <person name="Laird G."/>
            <person name="Lawlor S."/>
            <person name="Leongamornlert D.A."/>
            <person name="Lloyd D.M."/>
            <person name="Loveland J."/>
            <person name="Lovell J."/>
            <person name="Lush M.J."/>
            <person name="Lyne R."/>
            <person name="Martin S."/>
            <person name="Mashreghi-Mohammadi M."/>
            <person name="Matthews L."/>
            <person name="Matthews N.S.W."/>
            <person name="McLaren S."/>
            <person name="Milne S."/>
            <person name="Mistry S."/>
            <person name="Moore M.J.F."/>
            <person name="Nickerson T."/>
            <person name="O'Dell C.N."/>
            <person name="Oliver K."/>
            <person name="Palmeiri A."/>
            <person name="Palmer S.A."/>
            <person name="Parker A."/>
            <person name="Patel D."/>
            <person name="Pearce A.V."/>
            <person name="Peck A.I."/>
            <person name="Pelan S."/>
            <person name="Phelps K."/>
            <person name="Phillimore B.J."/>
            <person name="Plumb R."/>
            <person name="Rajan J."/>
            <person name="Raymond C."/>
            <person name="Rouse G."/>
            <person name="Saenphimmachak C."/>
            <person name="Sehra H.K."/>
            <person name="Sheridan E."/>
            <person name="Shownkeen R."/>
            <person name="Sims S."/>
            <person name="Skuce C.D."/>
            <person name="Smith M."/>
            <person name="Steward C."/>
            <person name="Subramanian S."/>
            <person name="Sycamore N."/>
            <person name="Tracey A."/>
            <person name="Tromans A."/>
            <person name="Van Helmond Z."/>
            <person name="Wall M."/>
            <person name="Wallis J.M."/>
            <person name="White S."/>
            <person name="Whitehead S.L."/>
            <person name="Wilkinson J.E."/>
            <person name="Willey D.L."/>
            <person name="Williams H."/>
            <person name="Wilming L."/>
            <person name="Wray P.W."/>
            <person name="Wu Z."/>
            <person name="Coulson A."/>
            <person name="Vaudin M."/>
            <person name="Sulston J.E."/>
            <person name="Durbin R.M."/>
            <person name="Hubbard T."/>
            <person name="Wooster R."/>
            <person name="Dunham I."/>
            <person name="Carter N.P."/>
            <person name="McVean G."/>
            <person name="Ross M.T."/>
            <person name="Harrow J."/>
            <person name="Olson M.V."/>
            <person name="Beck S."/>
            <person name="Rogers J."/>
            <person name="Bentley D.R."/>
        </authorList>
    </citation>
    <scope>NUCLEOTIDE SEQUENCE [LARGE SCALE GENOMIC DNA]</scope>
</reference>
<reference key="4">
    <citation type="submission" date="2005-07" db="EMBL/GenBank/DDBJ databases">
        <authorList>
            <person name="Mural R.J."/>
            <person name="Istrail S."/>
            <person name="Sutton G.G."/>
            <person name="Florea L."/>
            <person name="Halpern A.L."/>
            <person name="Mobarry C.M."/>
            <person name="Lippert R."/>
            <person name="Walenz B."/>
            <person name="Shatkay H."/>
            <person name="Dew I."/>
            <person name="Miller J.R."/>
            <person name="Flanigan M.J."/>
            <person name="Edwards N.J."/>
            <person name="Bolanos R."/>
            <person name="Fasulo D."/>
            <person name="Halldorsson B.V."/>
            <person name="Hannenhalli S."/>
            <person name="Turner R."/>
            <person name="Yooseph S."/>
            <person name="Lu F."/>
            <person name="Nusskern D.R."/>
            <person name="Shue B.C."/>
            <person name="Zheng X.H."/>
            <person name="Zhong F."/>
            <person name="Delcher A.L."/>
            <person name="Huson D.H."/>
            <person name="Kravitz S.A."/>
            <person name="Mouchard L."/>
            <person name="Reinert K."/>
            <person name="Remington K.A."/>
            <person name="Clark A.G."/>
            <person name="Waterman M.S."/>
            <person name="Eichler E.E."/>
            <person name="Adams M.D."/>
            <person name="Hunkapiller M.W."/>
            <person name="Myers E.W."/>
            <person name="Venter J.C."/>
        </authorList>
    </citation>
    <scope>NUCLEOTIDE SEQUENCE [LARGE SCALE GENOMIC DNA]</scope>
</reference>
<reference key="5">
    <citation type="journal article" date="2004" name="Genome Res.">
        <title>The status, quality, and expansion of the NIH full-length cDNA project: the Mammalian Gene Collection (MGC).</title>
        <authorList>
            <consortium name="The MGC Project Team"/>
        </authorList>
    </citation>
    <scope>NUCLEOTIDE SEQUENCE [LARGE SCALE MRNA]</scope>
</reference>
<keyword id="KW-1003">Cell membrane</keyword>
<keyword id="KW-0165">Cleavage on pair of basic residues</keyword>
<keyword id="KW-1015">Disulfide bond</keyword>
<keyword id="KW-0272">Extracellular matrix</keyword>
<keyword id="KW-0278">Fertilization</keyword>
<keyword id="KW-0325">Glycoprotein</keyword>
<keyword id="KW-0472">Membrane</keyword>
<keyword id="KW-1267">Proteomics identification</keyword>
<keyword id="KW-0675">Receptor</keyword>
<keyword id="KW-1185">Reference proteome</keyword>
<keyword id="KW-0964">Secreted</keyword>
<keyword id="KW-0732">Signal</keyword>
<keyword id="KW-0812">Transmembrane</keyword>
<keyword id="KW-1133">Transmembrane helix</keyword>
<proteinExistence type="evidence at protein level"/>
<dbReference type="EMBL" id="U05781">
    <property type="protein sequence ID" value="AAA74391.1"/>
    <property type="molecule type" value="Genomic_DNA"/>
</dbReference>
<dbReference type="EMBL" id="AK314151">
    <property type="protein sequence ID" value="BAG36838.1"/>
    <property type="molecule type" value="mRNA"/>
</dbReference>
<dbReference type="EMBL" id="AL359924">
    <property type="status" value="NOT_ANNOTATED_CDS"/>
    <property type="molecule type" value="Genomic_DNA"/>
</dbReference>
<dbReference type="EMBL" id="CH471098">
    <property type="protein sequence ID" value="EAW70072.1"/>
    <property type="molecule type" value="Genomic_DNA"/>
</dbReference>
<dbReference type="EMBL" id="BC069521">
    <property type="protein sequence ID" value="AAH69521.1"/>
    <property type="molecule type" value="mRNA"/>
</dbReference>
<dbReference type="CCDS" id="CCDS1615.1"/>
<dbReference type="PIR" id="S70403">
    <property type="entry name" value="S70403"/>
</dbReference>
<dbReference type="RefSeq" id="NP_067009.1">
    <property type="nucleotide sequence ID" value="NM_021186.5"/>
</dbReference>
<dbReference type="SMR" id="Q12836"/>
<dbReference type="FunCoup" id="Q12836">
    <property type="interactions" value="22"/>
</dbReference>
<dbReference type="IntAct" id="Q12836">
    <property type="interactions" value="12"/>
</dbReference>
<dbReference type="MINT" id="Q12836"/>
<dbReference type="STRING" id="9606.ENSP00000482304"/>
<dbReference type="GlyCosmos" id="Q12836">
    <property type="glycosylation" value="7 sites, No reported glycans"/>
</dbReference>
<dbReference type="GlyGen" id="Q12836">
    <property type="glycosylation" value="8 sites"/>
</dbReference>
<dbReference type="iPTMnet" id="Q12836"/>
<dbReference type="PhosphoSitePlus" id="Q12836"/>
<dbReference type="BioMuta" id="ZP4"/>
<dbReference type="DMDM" id="46397080"/>
<dbReference type="MassIVE" id="Q12836"/>
<dbReference type="PaxDb" id="9606-ENSP00000482304"/>
<dbReference type="PeptideAtlas" id="Q12836"/>
<dbReference type="ProteomicsDB" id="58977"/>
<dbReference type="Antibodypedia" id="2377">
    <property type="antibodies" value="159 antibodies from 26 providers"/>
</dbReference>
<dbReference type="DNASU" id="57829"/>
<dbReference type="Ensembl" id="ENST00000366570.5">
    <property type="protein sequence ID" value="ENSP00000355529.4"/>
    <property type="gene ID" value="ENSG00000116996.10"/>
</dbReference>
<dbReference type="Ensembl" id="ENST00000611898.4">
    <property type="protein sequence ID" value="ENSP00000482304.1"/>
    <property type="gene ID" value="ENSG00000116996.10"/>
</dbReference>
<dbReference type="GeneID" id="57829"/>
<dbReference type="KEGG" id="hsa:57829"/>
<dbReference type="MANE-Select" id="ENST00000366570.5">
    <property type="protein sequence ID" value="ENSP00000355529.4"/>
    <property type="RefSeq nucleotide sequence ID" value="NM_021186.5"/>
    <property type="RefSeq protein sequence ID" value="NP_067009.1"/>
</dbReference>
<dbReference type="UCSC" id="uc001hym.3">
    <property type="organism name" value="human"/>
</dbReference>
<dbReference type="AGR" id="HGNC:15770"/>
<dbReference type="CTD" id="57829"/>
<dbReference type="DisGeNET" id="57829"/>
<dbReference type="GeneCards" id="ZP4"/>
<dbReference type="HGNC" id="HGNC:15770">
    <property type="gene designation" value="ZP4"/>
</dbReference>
<dbReference type="HPA" id="ENSG00000116996">
    <property type="expression patterns" value="Tissue enriched (ovary)"/>
</dbReference>
<dbReference type="MalaCards" id="ZP4"/>
<dbReference type="MIM" id="613514">
    <property type="type" value="gene"/>
</dbReference>
<dbReference type="neXtProt" id="NX_Q12836"/>
<dbReference type="OpenTargets" id="ENSG00000116996"/>
<dbReference type="PharmGKB" id="PA38036"/>
<dbReference type="VEuPathDB" id="HostDB:ENSG00000116996"/>
<dbReference type="eggNOG" id="ENOG502QU54">
    <property type="taxonomic scope" value="Eukaryota"/>
</dbReference>
<dbReference type="GeneTree" id="ENSGT00940000161324"/>
<dbReference type="HOGENOM" id="CLU_034433_0_0_1"/>
<dbReference type="InParanoid" id="Q12836"/>
<dbReference type="OMA" id="LNCPDQT"/>
<dbReference type="OrthoDB" id="8919081at2759"/>
<dbReference type="PAN-GO" id="Q12836">
    <property type="GO annotations" value="6 GO annotations based on evolutionary models"/>
</dbReference>
<dbReference type="PhylomeDB" id="Q12836"/>
<dbReference type="TreeFam" id="TF332794"/>
<dbReference type="PathwayCommons" id="Q12836"/>
<dbReference type="Reactome" id="R-HSA-2534343">
    <property type="pathway name" value="Interaction With Cumulus Cells And The Zona Pellucida"/>
</dbReference>
<dbReference type="SignaLink" id="Q12836"/>
<dbReference type="BioGRID-ORCS" id="57829">
    <property type="hits" value="14 hits in 1138 CRISPR screens"/>
</dbReference>
<dbReference type="GeneWiki" id="ZP4"/>
<dbReference type="GenomeRNAi" id="57829"/>
<dbReference type="Pharos" id="Q12836">
    <property type="development level" value="Tbio"/>
</dbReference>
<dbReference type="PRO" id="PR:Q12836"/>
<dbReference type="Proteomes" id="UP000005640">
    <property type="component" value="Chromosome 1"/>
</dbReference>
<dbReference type="RNAct" id="Q12836">
    <property type="molecule type" value="protein"/>
</dbReference>
<dbReference type="Bgee" id="ENSG00000116996">
    <property type="expression patterns" value="Expressed in oocyte and 13 other cell types or tissues"/>
</dbReference>
<dbReference type="GO" id="GO:0062023">
    <property type="term" value="C:collagen-containing extracellular matrix"/>
    <property type="evidence" value="ECO:0000318"/>
    <property type="project" value="GO_Central"/>
</dbReference>
<dbReference type="GO" id="GO:0035805">
    <property type="term" value="C:egg coat"/>
    <property type="evidence" value="ECO:0000314"/>
    <property type="project" value="UniProtKB"/>
</dbReference>
<dbReference type="GO" id="GO:0005576">
    <property type="term" value="C:extracellular region"/>
    <property type="evidence" value="ECO:0000304"/>
    <property type="project" value="Reactome"/>
</dbReference>
<dbReference type="GO" id="GO:0005886">
    <property type="term" value="C:plasma membrane"/>
    <property type="evidence" value="ECO:0007669"/>
    <property type="project" value="UniProtKB-SubCell"/>
</dbReference>
<dbReference type="GO" id="GO:0032190">
    <property type="term" value="F:acrosin binding"/>
    <property type="evidence" value="ECO:0000353"/>
    <property type="project" value="UniProtKB"/>
</dbReference>
<dbReference type="GO" id="GO:0042802">
    <property type="term" value="F:identical protein binding"/>
    <property type="evidence" value="ECO:0000353"/>
    <property type="project" value="IntAct"/>
</dbReference>
<dbReference type="GO" id="GO:0035804">
    <property type="term" value="F:structural constituent of egg coat"/>
    <property type="evidence" value="ECO:0000250"/>
    <property type="project" value="UniProtKB"/>
</dbReference>
<dbReference type="GO" id="GO:0060478">
    <property type="term" value="P:acrosomal vesicle exocytosis"/>
    <property type="evidence" value="ECO:0000315"/>
    <property type="project" value="UniProtKB"/>
</dbReference>
<dbReference type="GO" id="GO:0007339">
    <property type="term" value="P:binding of sperm to zona pellucida"/>
    <property type="evidence" value="ECO:0000318"/>
    <property type="project" value="GO_Central"/>
</dbReference>
<dbReference type="GO" id="GO:2000360">
    <property type="term" value="P:negative regulation of binding of sperm to zona pellucida"/>
    <property type="evidence" value="ECO:0000314"/>
    <property type="project" value="UniProtKB"/>
</dbReference>
<dbReference type="GO" id="GO:2000344">
    <property type="term" value="P:positive regulation of acrosome reaction"/>
    <property type="evidence" value="ECO:0000314"/>
    <property type="project" value="UniProtKB"/>
</dbReference>
<dbReference type="GO" id="GO:0002922">
    <property type="term" value="P:positive regulation of humoral immune response"/>
    <property type="evidence" value="ECO:0000314"/>
    <property type="project" value="UniProtKB"/>
</dbReference>
<dbReference type="GO" id="GO:0042102">
    <property type="term" value="P:positive regulation of T cell proliferation"/>
    <property type="evidence" value="ECO:0000314"/>
    <property type="project" value="UniProtKB"/>
</dbReference>
<dbReference type="GO" id="GO:0060468">
    <property type="term" value="P:prevention of polyspermy"/>
    <property type="evidence" value="ECO:0000318"/>
    <property type="project" value="GO_Central"/>
</dbReference>
<dbReference type="CDD" id="cd00111">
    <property type="entry name" value="Trefoil"/>
    <property type="match status" value="1"/>
</dbReference>
<dbReference type="FunFam" id="2.60.40.3210:FF:000007">
    <property type="entry name" value="Zona pellucida glycoprotein 1"/>
    <property type="match status" value="1"/>
</dbReference>
<dbReference type="FunFam" id="2.60.40.4100:FF:000004">
    <property type="entry name" value="Zona pellucida sperm-binding protein 2"/>
    <property type="match status" value="1"/>
</dbReference>
<dbReference type="FunFam" id="4.10.110.10:FF:000004">
    <property type="entry name" value="zona pellucida sperm-binding protein 4 isoform X1"/>
    <property type="match status" value="1"/>
</dbReference>
<dbReference type="Gene3D" id="4.10.110.10">
    <property type="entry name" value="Spasmolytic Protein, domain 1"/>
    <property type="match status" value="1"/>
</dbReference>
<dbReference type="Gene3D" id="2.60.40.4100">
    <property type="entry name" value="Zona pellucida, ZP-C domain"/>
    <property type="match status" value="1"/>
</dbReference>
<dbReference type="Gene3D" id="2.60.40.3210">
    <property type="entry name" value="Zona pellucida, ZP-N domain"/>
    <property type="match status" value="1"/>
</dbReference>
<dbReference type="InterPro" id="IPR017957">
    <property type="entry name" value="P_trefoil_CS"/>
</dbReference>
<dbReference type="InterPro" id="IPR000519">
    <property type="entry name" value="P_trefoil_dom"/>
</dbReference>
<dbReference type="InterPro" id="IPR044913">
    <property type="entry name" value="P_trefoil_dom_sf"/>
</dbReference>
<dbReference type="InterPro" id="IPR051148">
    <property type="entry name" value="Zona_Pellucida_Domain_gp"/>
</dbReference>
<dbReference type="InterPro" id="IPR055355">
    <property type="entry name" value="ZP-C"/>
</dbReference>
<dbReference type="InterPro" id="IPR042235">
    <property type="entry name" value="ZP-C_dom"/>
</dbReference>
<dbReference type="InterPro" id="IPR055356">
    <property type="entry name" value="ZP-N"/>
</dbReference>
<dbReference type="InterPro" id="IPR054554">
    <property type="entry name" value="ZP1/4_Ig-like"/>
</dbReference>
<dbReference type="InterPro" id="IPR048290">
    <property type="entry name" value="ZP_chr"/>
</dbReference>
<dbReference type="InterPro" id="IPR001507">
    <property type="entry name" value="ZP_dom"/>
</dbReference>
<dbReference type="InterPro" id="IPR017977">
    <property type="entry name" value="ZP_dom_CS"/>
</dbReference>
<dbReference type="PANTHER" id="PTHR23343">
    <property type="entry name" value="ZONA PELLUCIDA SPERM-BINDING PROTEIN"/>
    <property type="match status" value="1"/>
</dbReference>
<dbReference type="PANTHER" id="PTHR23343:SF31">
    <property type="entry name" value="ZONA PELLUCIDA SPERM-BINDING PROTEIN 4"/>
    <property type="match status" value="1"/>
</dbReference>
<dbReference type="Pfam" id="PF00088">
    <property type="entry name" value="Trefoil"/>
    <property type="match status" value="1"/>
</dbReference>
<dbReference type="Pfam" id="PF00100">
    <property type="entry name" value="Zona_pellucida"/>
    <property type="match status" value="1"/>
</dbReference>
<dbReference type="Pfam" id="PF23344">
    <property type="entry name" value="ZP-N"/>
    <property type="match status" value="1"/>
</dbReference>
<dbReference type="Pfam" id="PF22821">
    <property type="entry name" value="ZP1_ZP4_Ig-like"/>
    <property type="match status" value="1"/>
</dbReference>
<dbReference type="PRINTS" id="PR00023">
    <property type="entry name" value="ZPELLUCIDA"/>
</dbReference>
<dbReference type="SMART" id="SM00018">
    <property type="entry name" value="PD"/>
    <property type="match status" value="1"/>
</dbReference>
<dbReference type="SMART" id="SM00241">
    <property type="entry name" value="ZP"/>
    <property type="match status" value="1"/>
</dbReference>
<dbReference type="SUPFAM" id="SSF57492">
    <property type="entry name" value="Trefoil"/>
    <property type="match status" value="1"/>
</dbReference>
<dbReference type="PROSITE" id="PS00025">
    <property type="entry name" value="P_TREFOIL_1"/>
    <property type="match status" value="1"/>
</dbReference>
<dbReference type="PROSITE" id="PS51448">
    <property type="entry name" value="P_TREFOIL_2"/>
    <property type="match status" value="1"/>
</dbReference>
<dbReference type="PROSITE" id="PS00682">
    <property type="entry name" value="ZP_1"/>
    <property type="match status" value="1"/>
</dbReference>
<dbReference type="PROSITE" id="PS51034">
    <property type="entry name" value="ZP_2"/>
    <property type="match status" value="1"/>
</dbReference>
<protein>
    <recommendedName>
        <fullName>Zona pellucida sperm-binding protein 4</fullName>
    </recommendedName>
    <alternativeName>
        <fullName>Zona pellucida glycoprotein 4</fullName>
        <shortName>Zp-4</shortName>
    </alternativeName>
    <alternativeName>
        <fullName>Zona pellucida protein B</fullName>
    </alternativeName>
    <component>
        <recommendedName>
            <fullName>Processed zona pellucida sperm-binding protein 4</fullName>
        </recommendedName>
    </component>
</protein>
<name>ZP4_HUMAN</name>
<accession>Q12836</accession>
<accession>B2RAE1</accession>
<evidence type="ECO:0000250" key="1"/>
<evidence type="ECO:0000250" key="2">
    <source>
        <dbReference type="UniProtKB" id="Q00193"/>
    </source>
</evidence>
<evidence type="ECO:0000255" key="3"/>
<evidence type="ECO:0000255" key="4">
    <source>
        <dbReference type="PROSITE-ProRule" id="PRU00375"/>
    </source>
</evidence>
<evidence type="ECO:0000255" key="5">
    <source>
        <dbReference type="PROSITE-ProRule" id="PRU00779"/>
    </source>
</evidence>
<evidence type="ECO:0000305" key="6"/>